<gene>
    <name evidence="5" type="primary">Rxylt1</name>
    <name type="synonym">Tmem5</name>
</gene>
<keyword id="KW-0333">Golgi apparatus</keyword>
<keyword id="KW-0472">Membrane</keyword>
<keyword id="KW-1185">Reference proteome</keyword>
<keyword id="KW-0735">Signal-anchor</keyword>
<keyword id="KW-0808">Transferase</keyword>
<keyword id="KW-0812">Transmembrane</keyword>
<keyword id="KW-1133">Transmembrane helix</keyword>
<proteinExistence type="evidence at transcript level"/>
<feature type="chain" id="PRO_0000072588" description="Ribitol-5-phosphate xylosyltransferase 1">
    <location>
        <begin position="1"/>
        <end position="444"/>
    </location>
</feature>
<feature type="topological domain" description="Cytoplasmic" evidence="2">
    <location>
        <begin position="1"/>
        <end position="9"/>
    </location>
</feature>
<feature type="transmembrane region" description="Helical; Signal-anchor for type II membrane protein" evidence="2">
    <location>
        <begin position="10"/>
        <end position="30"/>
    </location>
</feature>
<feature type="topological domain" description="Extracellular" evidence="2">
    <location>
        <begin position="31"/>
        <end position="444"/>
    </location>
</feature>
<feature type="region of interest" description="Disordered" evidence="3">
    <location>
        <begin position="38"/>
        <end position="79"/>
    </location>
</feature>
<feature type="compositionally biased region" description="Basic and acidic residues" evidence="3">
    <location>
        <begin position="51"/>
        <end position="60"/>
    </location>
</feature>
<organism>
    <name type="scientific">Mus musculus</name>
    <name type="common">Mouse</name>
    <dbReference type="NCBI Taxonomy" id="10090"/>
    <lineage>
        <taxon>Eukaryota</taxon>
        <taxon>Metazoa</taxon>
        <taxon>Chordata</taxon>
        <taxon>Craniata</taxon>
        <taxon>Vertebrata</taxon>
        <taxon>Euteleostomi</taxon>
        <taxon>Mammalia</taxon>
        <taxon>Eutheria</taxon>
        <taxon>Euarchontoglires</taxon>
        <taxon>Glires</taxon>
        <taxon>Rodentia</taxon>
        <taxon>Myomorpha</taxon>
        <taxon>Muroidea</taxon>
        <taxon>Muridae</taxon>
        <taxon>Murinae</taxon>
        <taxon>Mus</taxon>
        <taxon>Mus</taxon>
    </lineage>
</organism>
<accession>Q8VDX6</accession>
<accession>Q8R566</accession>
<evidence type="ECO:0000250" key="1">
    <source>
        <dbReference type="UniProtKB" id="Q9Y2B1"/>
    </source>
</evidence>
<evidence type="ECO:0000255" key="2"/>
<evidence type="ECO:0000256" key="3">
    <source>
        <dbReference type="SAM" id="MobiDB-lite"/>
    </source>
</evidence>
<evidence type="ECO:0000305" key="4"/>
<evidence type="ECO:0000312" key="5">
    <source>
        <dbReference type="MGI" id="MGI:2384919"/>
    </source>
</evidence>
<sequence>MRLTRTRLCSLLVALYCLFSIYAAYHVFFGRRRRPLGTTSRNSRKAAAAQAKERRGREQSALESEEWNPWEGDEKNEQRHRVKTNLQILNKSTKEKIEHRVQIWGKAAIGLYLWEHIFEGTLDPADVTAQWREGQSVVGRTHYSFITGPAVVPGYFSIDVDNVVLVLNGREKAKIFHATQWLIYAQNLMKTQKLQHLAVVLLGNEHCENDWIMQFLKRNGGFVDLLFITYDSPWINGADILQWPLGVATYRQFPVVEASWTMLHDERPYICNFLGTAYENSSRQALMNILKQDGNDKLCWVSAREQWQPQETNESLKNYQDALLHSDLTLCPVGVNTECYRIYEACSFGSIPVVEDVMTAGHCGNTTSQHSAPLQLLKAMGAPFIFIKNWKELPAILEKEKTISLQEKIQRRKVLLHWYQHFKTELKWKFTKILESSFFINNKV</sequence>
<name>RXLT1_MOUSE</name>
<comment type="function">
    <text evidence="1">Acts as a UDP-D-xylose:ribitol-5-phosphate beta1,4-xylosyltransferase, which catalyzes the transfer of UDP-D-xylose to ribitol 5-phosphate (Rbo5P) to form the Xylbeta1-4Rbo5P linkage on O-mannosyl glycan. Participates in the biosynthesis of the phosphorylated O-mannosyl trisaccharide (N-acetylgalactosamine-beta-3-N-acetylglucosamine-beta-4-(phosphate-6-)mannose), a carbohydrate structure present in alpha-dystroglycan (DAG1), which is required for binding laminin G-like domain-containing extracellular proteins with high affinity.</text>
</comment>
<comment type="catalytic activity">
    <reaction evidence="1">
        <text>3-O-[Rib-ol-P-Rib-ol-P-3-beta-D-GalNAc-(1-&gt;3)-beta-D-GlcNAc-(1-&gt;4)-(O-6-P-alpha-D-Man)]-Thr-[protein] + UDP-alpha-D-xylose = 3-O-[beta-D-Xyl-(1-&gt;4)-Rib-ol-P-Rib-ol-P-3-beta-D-GalNAc-(1-&gt;3)-beta-D-GlcNAc-(1-&gt;4)-(O-6-P-alpha-D-Man)]-Thr-[protein] + UDP + H(+)</text>
        <dbReference type="Rhea" id="RHEA:57880"/>
        <dbReference type="Rhea" id="RHEA-COMP:15021"/>
        <dbReference type="Rhea" id="RHEA-COMP:15023"/>
        <dbReference type="ChEBI" id="CHEBI:15378"/>
        <dbReference type="ChEBI" id="CHEBI:57632"/>
        <dbReference type="ChEBI" id="CHEBI:58223"/>
        <dbReference type="ChEBI" id="CHEBI:142403"/>
        <dbReference type="ChEBI" id="CHEBI:142405"/>
        <dbReference type="EC" id="2.4.2.61"/>
    </reaction>
    <physiologicalReaction direction="left-to-right" evidence="1">
        <dbReference type="Rhea" id="RHEA:57881"/>
    </physiologicalReaction>
</comment>
<comment type="pathway">
    <text evidence="1">Protein modification; protein glycosylation.</text>
</comment>
<comment type="subunit">
    <text evidence="1">Forms a complex composed of FKTN/fukutin, FKRP and RXYLT1/TMEM5.</text>
</comment>
<comment type="subcellular location">
    <subcellularLocation>
        <location evidence="1">Golgi apparatus membrane</location>
        <topology evidence="1">Single-pass type II membrane protein</topology>
    </subcellularLocation>
</comment>
<comment type="similarity">
    <text evidence="4">Belongs to the RXYLT1 family.</text>
</comment>
<protein>
    <recommendedName>
        <fullName evidence="4">Ribitol-5-phosphate xylosyltransferase 1</fullName>
        <ecNumber evidence="1">2.4.2.61</ecNumber>
    </recommendedName>
    <alternativeName>
        <fullName evidence="4">Transmembrane protein 5</fullName>
    </alternativeName>
    <alternativeName>
        <fullName evidence="1">UDP-D-xylose:ribitol-5-phosphate beta1,4-xylosyltransferase</fullName>
    </alternativeName>
</protein>
<reference key="1">
    <citation type="journal article" date="2004" name="Genome Res.">
        <title>The status, quality, and expansion of the NIH full-length cDNA project: the Mammalian Gene Collection (MGC).</title>
        <authorList>
            <consortium name="The MGC Project Team"/>
        </authorList>
    </citation>
    <scope>NUCLEOTIDE SEQUENCE [LARGE SCALE MRNA]</scope>
    <source>
        <strain>FVB/N</strain>
        <tissue>Mammary tumor</tissue>
    </source>
</reference>
<dbReference type="EC" id="2.4.2.61" evidence="1"/>
<dbReference type="EMBL" id="BC020100">
    <property type="protein sequence ID" value="AAH20100.1"/>
    <property type="molecule type" value="mRNA"/>
</dbReference>
<dbReference type="EMBL" id="BC023194">
    <property type="protein sequence ID" value="AAH23194.1"/>
    <property type="molecule type" value="mRNA"/>
</dbReference>
<dbReference type="CCDS" id="CCDS24214.1"/>
<dbReference type="RefSeq" id="NP_694699.1">
    <property type="nucleotide sequence ID" value="NM_153059.2"/>
</dbReference>
<dbReference type="BioGRID" id="229741">
    <property type="interactions" value="1"/>
</dbReference>
<dbReference type="FunCoup" id="Q8VDX6">
    <property type="interactions" value="1921"/>
</dbReference>
<dbReference type="STRING" id="10090.ENSMUSP00000119308"/>
<dbReference type="iPTMnet" id="Q8VDX6"/>
<dbReference type="PhosphoSitePlus" id="Q8VDX6"/>
<dbReference type="SwissPalm" id="Q8VDX6"/>
<dbReference type="jPOST" id="Q8VDX6"/>
<dbReference type="PaxDb" id="10090-ENSMUSP00000119308"/>
<dbReference type="PeptideAtlas" id="Q8VDX6"/>
<dbReference type="ProteomicsDB" id="259427"/>
<dbReference type="Antibodypedia" id="29125">
    <property type="antibodies" value="148 antibodies from 23 providers"/>
</dbReference>
<dbReference type="DNASU" id="216395"/>
<dbReference type="Ensembl" id="ENSMUST00000140299.3">
    <property type="protein sequence ID" value="ENSMUSP00000119308.2"/>
    <property type="gene ID" value="ENSMUSG00000034620.18"/>
</dbReference>
<dbReference type="GeneID" id="216395"/>
<dbReference type="KEGG" id="mmu:216395"/>
<dbReference type="UCSC" id="uc007hgd.1">
    <property type="organism name" value="mouse"/>
</dbReference>
<dbReference type="AGR" id="MGI:2384919"/>
<dbReference type="CTD" id="10329"/>
<dbReference type="MGI" id="MGI:2384919">
    <property type="gene designation" value="Rxylt1"/>
</dbReference>
<dbReference type="VEuPathDB" id="HostDB:ENSMUSG00000034620"/>
<dbReference type="eggNOG" id="ENOG502QT2E">
    <property type="taxonomic scope" value="Eukaryota"/>
</dbReference>
<dbReference type="GeneTree" id="ENSGT00390000003526"/>
<dbReference type="HOGENOM" id="CLU_040812_0_0_1"/>
<dbReference type="InParanoid" id="Q8VDX6"/>
<dbReference type="OMA" id="IVGRTHY"/>
<dbReference type="OrthoDB" id="8560686at2759"/>
<dbReference type="PhylomeDB" id="Q8VDX6"/>
<dbReference type="TreeFam" id="TF328717"/>
<dbReference type="UniPathway" id="UPA00378"/>
<dbReference type="BioGRID-ORCS" id="216395">
    <property type="hits" value="4 hits in 80 CRISPR screens"/>
</dbReference>
<dbReference type="ChiTaRS" id="Rxylt1">
    <property type="organism name" value="mouse"/>
</dbReference>
<dbReference type="PRO" id="PR:Q8VDX6"/>
<dbReference type="Proteomes" id="UP000000589">
    <property type="component" value="Chromosome 10"/>
</dbReference>
<dbReference type="RNAct" id="Q8VDX6">
    <property type="molecule type" value="protein"/>
</dbReference>
<dbReference type="Bgee" id="ENSMUSG00000034620">
    <property type="expression patterns" value="Expressed in ectoplacental cone and 255 other cell types or tissues"/>
</dbReference>
<dbReference type="ExpressionAtlas" id="Q8VDX6">
    <property type="expression patterns" value="baseline and differential"/>
</dbReference>
<dbReference type="GO" id="GO:0005794">
    <property type="term" value="C:Golgi apparatus"/>
    <property type="evidence" value="ECO:0000314"/>
    <property type="project" value="CACAO"/>
</dbReference>
<dbReference type="GO" id="GO:0000139">
    <property type="term" value="C:Golgi membrane"/>
    <property type="evidence" value="ECO:0007669"/>
    <property type="project" value="UniProtKB-SubCell"/>
</dbReference>
<dbReference type="GO" id="GO:0005654">
    <property type="term" value="C:nucleoplasm"/>
    <property type="evidence" value="ECO:0007669"/>
    <property type="project" value="Ensembl"/>
</dbReference>
<dbReference type="GO" id="GO:0120053">
    <property type="term" value="F:ribitol beta-1,4-xylosyltransferase activity"/>
    <property type="evidence" value="ECO:0000250"/>
    <property type="project" value="UniProtKB"/>
</dbReference>
<dbReference type="GO" id="GO:0035269">
    <property type="term" value="P:protein O-linked mannosylation"/>
    <property type="evidence" value="ECO:0000250"/>
    <property type="project" value="UniProtKB"/>
</dbReference>
<dbReference type="CDD" id="cd21099">
    <property type="entry name" value="RXYLT1-like"/>
    <property type="match status" value="1"/>
</dbReference>
<dbReference type="InterPro" id="IPR055286">
    <property type="entry name" value="RXYLT1-like"/>
</dbReference>
<dbReference type="PANTHER" id="PTHR15576">
    <property type="entry name" value="RIBITOL-5-PHOSPHATE XYLOSYLTRANSFERASE 1"/>
    <property type="match status" value="1"/>
</dbReference>
<dbReference type="PANTHER" id="PTHR15576:SF1">
    <property type="entry name" value="RIBITOL-5-PHOSPHATE XYLOSYLTRANSFERASE 1"/>
    <property type="match status" value="1"/>
</dbReference>
<dbReference type="Pfam" id="PF24785">
    <property type="entry name" value="RXYLT1_C"/>
    <property type="match status" value="1"/>
</dbReference>
<dbReference type="Pfam" id="PF24786">
    <property type="entry name" value="RXYLT1_N"/>
    <property type="match status" value="1"/>
</dbReference>